<evidence type="ECO:0000255" key="1">
    <source>
        <dbReference type="HAMAP-Rule" id="MF_01302"/>
    </source>
</evidence>
<evidence type="ECO:0000305" key="2"/>
<feature type="chain" id="PRO_1000140584" description="Small ribosomal subunit protein uS8">
    <location>
        <begin position="1"/>
        <end position="130"/>
    </location>
</feature>
<reference key="1">
    <citation type="journal article" date="2008" name="Genomics">
        <title>Characterization of ST-4821 complex, a unique Neisseria meningitidis clone.</title>
        <authorList>
            <person name="Peng J."/>
            <person name="Yang L."/>
            <person name="Yang F."/>
            <person name="Yang J."/>
            <person name="Yan Y."/>
            <person name="Nie H."/>
            <person name="Zhang X."/>
            <person name="Xiong Z."/>
            <person name="Jiang Y."/>
            <person name="Cheng F."/>
            <person name="Xu X."/>
            <person name="Chen S."/>
            <person name="Sun L."/>
            <person name="Li W."/>
            <person name="Shen Y."/>
            <person name="Shao Z."/>
            <person name="Liang X."/>
            <person name="Xu J."/>
            <person name="Jin Q."/>
        </authorList>
    </citation>
    <scope>NUCLEOTIDE SEQUENCE [LARGE SCALE GENOMIC DNA]</scope>
    <source>
        <strain>053442</strain>
    </source>
</reference>
<comment type="function">
    <text evidence="1">One of the primary rRNA binding proteins, it binds directly to 16S rRNA central domain where it helps coordinate assembly of the platform of the 30S subunit.</text>
</comment>
<comment type="subunit">
    <text evidence="1">Part of the 30S ribosomal subunit. Contacts proteins S5 and S12.</text>
</comment>
<comment type="similarity">
    <text evidence="1">Belongs to the universal ribosomal protein uS8 family.</text>
</comment>
<name>RS8_NEIM0</name>
<keyword id="KW-0687">Ribonucleoprotein</keyword>
<keyword id="KW-0689">Ribosomal protein</keyword>
<keyword id="KW-0694">RNA-binding</keyword>
<keyword id="KW-0699">rRNA-binding</keyword>
<sequence length="130" mass="14124">MSMHDPISDMLTRIRNAQRANKAAVAMPSSKLKCAIAKVLKEEGYIEDFAVSSDVKSILEIQLKYYAGRPVIEQIKRVSRPGLRIYKASSEIPSVMNGLGIAIVSTSKGVMTDRKARSQGVGGELLCIVA</sequence>
<protein>
    <recommendedName>
        <fullName evidence="1">Small ribosomal subunit protein uS8</fullName>
    </recommendedName>
    <alternativeName>
        <fullName evidence="2">30S ribosomal protein S8</fullName>
    </alternativeName>
</protein>
<gene>
    <name evidence="1" type="primary">rpsH</name>
    <name type="ordered locus">NMCC_1992a</name>
</gene>
<accession>A9M3V2</accession>
<proteinExistence type="inferred from homology"/>
<dbReference type="EMBL" id="CP000381">
    <property type="protein sequence ID" value="ABX74241.1"/>
    <property type="molecule type" value="Genomic_DNA"/>
</dbReference>
<dbReference type="RefSeq" id="WP_002215438.1">
    <property type="nucleotide sequence ID" value="NC_010120.1"/>
</dbReference>
<dbReference type="SMR" id="A9M3V2"/>
<dbReference type="GeneID" id="93387231"/>
<dbReference type="KEGG" id="nmn:NMCC_1992a"/>
<dbReference type="HOGENOM" id="CLU_098428_0_0_4"/>
<dbReference type="Proteomes" id="UP000001177">
    <property type="component" value="Chromosome"/>
</dbReference>
<dbReference type="GO" id="GO:1990904">
    <property type="term" value="C:ribonucleoprotein complex"/>
    <property type="evidence" value="ECO:0007669"/>
    <property type="project" value="UniProtKB-KW"/>
</dbReference>
<dbReference type="GO" id="GO:0005840">
    <property type="term" value="C:ribosome"/>
    <property type="evidence" value="ECO:0007669"/>
    <property type="project" value="UniProtKB-KW"/>
</dbReference>
<dbReference type="GO" id="GO:0019843">
    <property type="term" value="F:rRNA binding"/>
    <property type="evidence" value="ECO:0007669"/>
    <property type="project" value="UniProtKB-UniRule"/>
</dbReference>
<dbReference type="GO" id="GO:0003735">
    <property type="term" value="F:structural constituent of ribosome"/>
    <property type="evidence" value="ECO:0007669"/>
    <property type="project" value="InterPro"/>
</dbReference>
<dbReference type="GO" id="GO:0006412">
    <property type="term" value="P:translation"/>
    <property type="evidence" value="ECO:0007669"/>
    <property type="project" value="UniProtKB-UniRule"/>
</dbReference>
<dbReference type="FunFam" id="3.30.1370.30:FF:000003">
    <property type="entry name" value="30S ribosomal protein S8"/>
    <property type="match status" value="1"/>
</dbReference>
<dbReference type="FunFam" id="3.30.1490.10:FF:000001">
    <property type="entry name" value="30S ribosomal protein S8"/>
    <property type="match status" value="1"/>
</dbReference>
<dbReference type="Gene3D" id="3.30.1370.30">
    <property type="match status" value="1"/>
</dbReference>
<dbReference type="Gene3D" id="3.30.1490.10">
    <property type="match status" value="1"/>
</dbReference>
<dbReference type="HAMAP" id="MF_01302_B">
    <property type="entry name" value="Ribosomal_uS8_B"/>
    <property type="match status" value="1"/>
</dbReference>
<dbReference type="InterPro" id="IPR000630">
    <property type="entry name" value="Ribosomal_uS8"/>
</dbReference>
<dbReference type="InterPro" id="IPR047863">
    <property type="entry name" value="Ribosomal_uS8_CS"/>
</dbReference>
<dbReference type="InterPro" id="IPR035987">
    <property type="entry name" value="Ribosomal_uS8_sf"/>
</dbReference>
<dbReference type="NCBIfam" id="NF001109">
    <property type="entry name" value="PRK00136.1"/>
    <property type="match status" value="1"/>
</dbReference>
<dbReference type="PANTHER" id="PTHR11758">
    <property type="entry name" value="40S RIBOSOMAL PROTEIN S15A"/>
    <property type="match status" value="1"/>
</dbReference>
<dbReference type="Pfam" id="PF00410">
    <property type="entry name" value="Ribosomal_S8"/>
    <property type="match status" value="1"/>
</dbReference>
<dbReference type="SUPFAM" id="SSF56047">
    <property type="entry name" value="Ribosomal protein S8"/>
    <property type="match status" value="1"/>
</dbReference>
<dbReference type="PROSITE" id="PS00053">
    <property type="entry name" value="RIBOSOMAL_S8"/>
    <property type="match status" value="1"/>
</dbReference>
<organism>
    <name type="scientific">Neisseria meningitidis serogroup C (strain 053442)</name>
    <dbReference type="NCBI Taxonomy" id="374833"/>
    <lineage>
        <taxon>Bacteria</taxon>
        <taxon>Pseudomonadati</taxon>
        <taxon>Pseudomonadota</taxon>
        <taxon>Betaproteobacteria</taxon>
        <taxon>Neisseriales</taxon>
        <taxon>Neisseriaceae</taxon>
        <taxon>Neisseria</taxon>
    </lineage>
</organism>